<feature type="signal peptide" evidence="5">
    <location>
        <begin position="1"/>
        <end position="53"/>
    </location>
</feature>
<feature type="chain" id="PRO_0000041758" description="Serine protease EspC">
    <location>
        <begin position="54"/>
        <end position="1305"/>
    </location>
</feature>
<feature type="chain" id="PRO_0000387592" description="Secreted autotransporter protein EspC">
    <location>
        <begin position="54"/>
        <end position="1018"/>
    </location>
</feature>
<feature type="chain" id="PRO_0000041759" description="Autotransporter protein EspC translocator" evidence="1">
    <location>
        <begin position="1019"/>
        <end position="1305"/>
    </location>
</feature>
<feature type="domain" description="Peptidase S6" evidence="3">
    <location>
        <begin position="55"/>
        <end position="297"/>
    </location>
</feature>
<feature type="domain" description="Autotransporter" evidence="2">
    <location>
        <begin position="1039"/>
        <end position="1305"/>
    </location>
</feature>
<feature type="active site" description="Charge relay system" evidence="3">
    <location>
        <position position="125"/>
    </location>
</feature>
<feature type="active site" description="Charge relay system" evidence="3">
    <location>
        <position position="153"/>
    </location>
</feature>
<feature type="active site" description="Charge relay system" evidence="3">
    <location>
        <position position="256"/>
    </location>
</feature>
<feature type="site" description="Cleavage" evidence="1">
    <location>
        <begin position="1018"/>
        <end position="1019"/>
    </location>
</feature>
<feature type="mutagenesis site" description="Abolishes protease and cytotoxic activities." evidence="4">
    <original>S</original>
    <variation>I</variation>
    <location>
        <position position="256"/>
    </location>
</feature>
<feature type="sequence conflict" description="In Ref. 4; AA sequence." evidence="6" ref="4">
    <original>Q</original>
    <variation>G</variation>
    <location>
        <position position="55"/>
    </location>
</feature>
<feature type="sequence conflict" description="In Ref. 1; AAC44731." evidence="6" ref="1">
    <original>V</original>
    <variation>A</variation>
    <location>
        <position position="209"/>
    </location>
</feature>
<feature type="sequence conflict" description="In Ref. 1; AAC44731." evidence="6" ref="1">
    <original>W</original>
    <variation>G</variation>
    <location>
        <position position="287"/>
    </location>
</feature>
<feature type="sequence conflict" description="In Ref. 1; AAC44731." evidence="6" ref="1">
    <original>E</original>
    <variation>A</variation>
    <location>
        <position position="333"/>
    </location>
</feature>
<feature type="sequence conflict" description="In Ref. 1; AAC44731." evidence="6" ref="1">
    <original>N</original>
    <variation>H</variation>
    <location>
        <position position="514"/>
    </location>
</feature>
<feature type="sequence conflict" description="In Ref. 1; AAC44731." evidence="6" ref="1">
    <original>MK</original>
    <variation>IR</variation>
    <location>
        <begin position="849"/>
        <end position="850"/>
    </location>
</feature>
<feature type="sequence conflict" description="In Ref. 1; AAC44731." evidence="6" ref="1">
    <original>N</original>
    <variation>T</variation>
    <location>
        <position position="921"/>
    </location>
</feature>
<feature type="sequence conflict" description="In Ref. 1; AAC44731." evidence="6" ref="1">
    <original>S</original>
    <variation>I</variation>
    <location>
        <position position="1189"/>
    </location>
</feature>
<feature type="sequence conflict" description="In Ref. 2; AAG37043." evidence="6" ref="2">
    <original>N</original>
    <variation>D</variation>
    <location>
        <position position="1300"/>
    </location>
</feature>
<reference key="1">
    <citation type="journal article" date="1996" name="J. Bacteriol.">
        <title>Characterization of EspC, a 110-kilodalton protein secreted by enteropathogenic Escherichia coli which is homologous to members of the immunoglobulin A protease-like family of secreted proteins.</title>
        <authorList>
            <person name="Stein M."/>
            <person name="Kenny B."/>
            <person name="Stein M.A."/>
            <person name="Finlay B.B."/>
        </authorList>
    </citation>
    <scope>NUCLEOTIDE SEQUENCE [GENOMIC DNA]</scope>
    <scope>SUBCELLULAR LOCATION</scope>
</reference>
<reference key="2">
    <citation type="journal article" date="2001" name="Infect. Immun.">
        <title>EspC pathogenicity island of enteropathogenic Escherichia coli encodes an enterotoxin.</title>
        <authorList>
            <person name="Mellies J.L."/>
            <person name="Navarro-Garcia F."/>
            <person name="Okeke I."/>
            <person name="Frederickson J."/>
            <person name="Nataro J.P."/>
            <person name="Kaper J.B."/>
        </authorList>
    </citation>
    <scope>NUCLEOTIDE SEQUENCE [GENOMIC DNA]</scope>
</reference>
<reference key="3">
    <citation type="journal article" date="2009" name="J. Bacteriol.">
        <title>Complete genome sequence and comparative genome analysis of enteropathogenic Escherichia coli O127:H6 strain E2348/69.</title>
        <authorList>
            <person name="Iguchi A."/>
            <person name="Thomson N.R."/>
            <person name="Ogura Y."/>
            <person name="Saunders D."/>
            <person name="Ooka T."/>
            <person name="Henderson I.R."/>
            <person name="Harris D."/>
            <person name="Asadulghani M."/>
            <person name="Kurokawa K."/>
            <person name="Dean P."/>
            <person name="Kenny B."/>
            <person name="Quail M.A."/>
            <person name="Thurston S."/>
            <person name="Dougan G."/>
            <person name="Hayashi T."/>
            <person name="Parkhill J."/>
            <person name="Frankel G."/>
        </authorList>
    </citation>
    <scope>NUCLEOTIDE SEQUENCE [LARGE SCALE GENOMIC DNA]</scope>
    <source>
        <strain>E2348/69 / EPEC</strain>
    </source>
</reference>
<reference key="4">
    <citation type="journal article" date="1995" name="Proc. Natl. Acad. Sci. U.S.A.">
        <title>Protein secretion by enteropathogenic Escherichia coli is essential for transducing signals to epithelial cells.</title>
        <authorList>
            <person name="Kenny B."/>
            <person name="Finlay B.B."/>
        </authorList>
    </citation>
    <scope>PROTEIN SEQUENCE OF 54-74</scope>
</reference>
<reference key="5">
    <citation type="journal article" date="2004" name="Infect. Immun.">
        <title>The serine protease motif of EspC from enteropathogenic Escherichia coli produces epithelial damage by a mechanism different from that of Pet toxin from enteroaggregative E. coli.</title>
        <authorList>
            <person name="Navarro-Garcia F."/>
            <person name="Canizalez-Roman A."/>
            <person name="Sui B.Q."/>
            <person name="Nataro J.P."/>
            <person name="Azamar Y."/>
        </authorList>
    </citation>
    <scope>FUNCTION</scope>
    <scope>MUTAGENESIS OF SER-256</scope>
</reference>
<evidence type="ECO:0000250" key="1"/>
<evidence type="ECO:0000255" key="2">
    <source>
        <dbReference type="PROSITE-ProRule" id="PRU00556"/>
    </source>
</evidence>
<evidence type="ECO:0000255" key="3">
    <source>
        <dbReference type="PROSITE-ProRule" id="PRU01028"/>
    </source>
</evidence>
<evidence type="ECO:0000269" key="4">
    <source>
    </source>
</evidence>
<evidence type="ECO:0000269" key="5">
    <source>
    </source>
</evidence>
<evidence type="ECO:0000305" key="6"/>
<proteinExistence type="evidence at protein level"/>
<dbReference type="EC" id="3.4.21.-"/>
<dbReference type="EMBL" id="U69128">
    <property type="protein sequence ID" value="AAC44731.1"/>
    <property type="status" value="ALT_FRAME"/>
    <property type="molecule type" value="Genomic_DNA"/>
</dbReference>
<dbReference type="EMBL" id="AF297061">
    <property type="protein sequence ID" value="AAG37043.1"/>
    <property type="molecule type" value="Genomic_DNA"/>
</dbReference>
<dbReference type="EMBL" id="FM180568">
    <property type="protein sequence ID" value="CAS10463.1"/>
    <property type="molecule type" value="Genomic_DNA"/>
</dbReference>
<dbReference type="RefSeq" id="WP_001034000.1">
    <property type="nucleotide sequence ID" value="NC_011601.1"/>
</dbReference>
<dbReference type="SMR" id="Q9EZE7"/>
<dbReference type="MEROPS" id="N04.002"/>
<dbReference type="MEROPS" id="S06.010"/>
<dbReference type="TCDB" id="1.B.12.4.1">
    <property type="family name" value="the autotransporter-1 (at-1) family"/>
</dbReference>
<dbReference type="KEGG" id="ecg:E2348C_2915"/>
<dbReference type="HOGENOM" id="CLU_000723_0_0_6"/>
<dbReference type="Proteomes" id="UP000008205">
    <property type="component" value="Chromosome"/>
</dbReference>
<dbReference type="GO" id="GO:0009279">
    <property type="term" value="C:cell outer membrane"/>
    <property type="evidence" value="ECO:0007669"/>
    <property type="project" value="UniProtKB-SubCell"/>
</dbReference>
<dbReference type="GO" id="GO:0009986">
    <property type="term" value="C:cell surface"/>
    <property type="evidence" value="ECO:0007669"/>
    <property type="project" value="UniProtKB-SubCell"/>
</dbReference>
<dbReference type="GO" id="GO:0005576">
    <property type="term" value="C:extracellular region"/>
    <property type="evidence" value="ECO:0007669"/>
    <property type="project" value="UniProtKB-SubCell"/>
</dbReference>
<dbReference type="GO" id="GO:0042597">
    <property type="term" value="C:periplasmic space"/>
    <property type="evidence" value="ECO:0007669"/>
    <property type="project" value="UniProtKB-SubCell"/>
</dbReference>
<dbReference type="GO" id="GO:0004252">
    <property type="term" value="F:serine-type endopeptidase activity"/>
    <property type="evidence" value="ECO:0007669"/>
    <property type="project" value="InterPro"/>
</dbReference>
<dbReference type="GO" id="GO:0006508">
    <property type="term" value="P:proteolysis"/>
    <property type="evidence" value="ECO:0007669"/>
    <property type="project" value="UniProtKB-KW"/>
</dbReference>
<dbReference type="GO" id="GO:0141146">
    <property type="term" value="P:symbiont-mediated disruption of host tissue"/>
    <property type="evidence" value="ECO:0000269"/>
    <property type="project" value="SigSci"/>
</dbReference>
<dbReference type="CDD" id="cd01343">
    <property type="entry name" value="PL1_Passenger_AT"/>
    <property type="match status" value="1"/>
</dbReference>
<dbReference type="Gene3D" id="2.160.20.20">
    <property type="match status" value="1"/>
</dbReference>
<dbReference type="Gene3D" id="2.40.10.120">
    <property type="match status" value="1"/>
</dbReference>
<dbReference type="Gene3D" id="2.40.128.130">
    <property type="entry name" value="Autotransporter beta-domain"/>
    <property type="match status" value="1"/>
</dbReference>
<dbReference type="InterPro" id="IPR005546">
    <property type="entry name" value="Autotransporte_beta"/>
</dbReference>
<dbReference type="InterPro" id="IPR036709">
    <property type="entry name" value="Autotransporte_beta_dom_sf"/>
</dbReference>
<dbReference type="InterPro" id="IPR012332">
    <property type="entry name" value="Autotransporter_pectin_lyase_C"/>
</dbReference>
<dbReference type="InterPro" id="IPR024973">
    <property type="entry name" value="ESPR"/>
</dbReference>
<dbReference type="InterPro" id="IPR006315">
    <property type="entry name" value="OM_autotransptr_brl_dom"/>
</dbReference>
<dbReference type="InterPro" id="IPR011050">
    <property type="entry name" value="Pectin_lyase_fold/virulence"/>
</dbReference>
<dbReference type="InterPro" id="IPR000710">
    <property type="entry name" value="Peptidase_S6"/>
</dbReference>
<dbReference type="InterPro" id="IPR030396">
    <property type="entry name" value="Peptidase_S6_dom"/>
</dbReference>
<dbReference type="NCBIfam" id="TIGR01414">
    <property type="entry name" value="autotrans_barl"/>
    <property type="match status" value="1"/>
</dbReference>
<dbReference type="Pfam" id="PF03797">
    <property type="entry name" value="Autotransporter"/>
    <property type="match status" value="1"/>
</dbReference>
<dbReference type="Pfam" id="PF24078">
    <property type="entry name" value="Beta-sol_PIC_HAP1_IgA0_2nd"/>
    <property type="match status" value="1"/>
</dbReference>
<dbReference type="Pfam" id="PF13018">
    <property type="entry name" value="ESPR"/>
    <property type="match status" value="1"/>
</dbReference>
<dbReference type="Pfam" id="PF02395">
    <property type="entry name" value="Peptidase_S6"/>
    <property type="match status" value="1"/>
</dbReference>
<dbReference type="PRINTS" id="PR00921">
    <property type="entry name" value="IGASERPTASE"/>
</dbReference>
<dbReference type="SMART" id="SM00869">
    <property type="entry name" value="Autotransporter"/>
    <property type="match status" value="1"/>
</dbReference>
<dbReference type="SUPFAM" id="SSF103515">
    <property type="entry name" value="Autotransporter"/>
    <property type="match status" value="1"/>
</dbReference>
<dbReference type="SUPFAM" id="SSF51126">
    <property type="entry name" value="Pectin lyase-like"/>
    <property type="match status" value="2"/>
</dbReference>
<dbReference type="PROSITE" id="PS51208">
    <property type="entry name" value="AUTOTRANSPORTER"/>
    <property type="match status" value="1"/>
</dbReference>
<dbReference type="PROSITE" id="PS51691">
    <property type="entry name" value="PEPTIDASE_S6"/>
    <property type="match status" value="1"/>
</dbReference>
<comment type="function">
    <text evidence="4">Serine protease with enterotoxic and cytotoxic activities. Cleaves fodrin, but does not cause its redistribution within epithelial cells. The exact role of EspC in EPEC pathogenesis is still unknown.</text>
</comment>
<comment type="activity regulation">
    <text>Inhibition of cytotoxic activity by phenylmethylsulfonyl fluoride.</text>
</comment>
<comment type="subcellular location">
    <molecule>Serine protease EspC</molecule>
    <subcellularLocation>
        <location evidence="1">Periplasm</location>
    </subcellularLocation>
</comment>
<comment type="subcellular location">
    <molecule>Secreted autotransporter protein EspC</molecule>
    <subcellularLocation>
        <location>Secreted</location>
    </subcellularLocation>
    <subcellularLocation>
        <location>Cell surface</location>
    </subcellularLocation>
</comment>
<comment type="subcellular location">
    <molecule>Autotransporter protein EspC translocator</molecule>
    <subcellularLocation>
        <location evidence="1">Cell outer membrane</location>
        <topology evidence="1">Multi-pass membrane protein</topology>
    </subcellularLocation>
    <text evidence="1">The cleaved C-terminal fragment (autotransporter domain) is localized in the outer membrane.</text>
</comment>
<comment type="induction">
    <text>Expression is repressed by glucose.</text>
</comment>
<comment type="domain">
    <text evidence="6">The signal peptide, cleaved at the inner membrane, guides the autotransporter protein to the periplasmic space. Then, insertion of the C-terminal translocator domain in the outer membrane forms a hydrophilic pore for the translocation of the passenger domain to the bacterial cell surface, with subsequent cleavage (Probable).</text>
</comment>
<comment type="PTM">
    <text>Cleaved to release the mature protein from the outer membrane.</text>
</comment>
<comment type="sequence caution" evidence="6">
    <conflict type="frameshift">
        <sequence resource="EMBL-CDS" id="AAC44731"/>
    </conflict>
</comment>
<sequence>MNKIYALKYCHATGGLIAVSELASRVMKKAARGSLLALFNLSLYGAFLSASQAAQLNIDNVWARDYLDLAQNKGVFKAGATNVSIQLKNGQTFNFPNVPIPDFSPASNKGATTSIGGAYSVTATHNGTTHHAISTQNWGQSSYKYIDRMTNGDFAVTRLDKFVVETTGVKNSVDFSLNSHDALERYGVEINGEKKIIGFRVGAGTTYTVQNGNTYSTGQVYNPLLLSASMFQLNWDNKRPYNNTTPFYNETTGGDSGSGFYLYDNVKKEWVMLGTLFGIASSGADVWSILNQYDENTVNGLKNKFTQKVQLNNNTMSLNSDSFTLAGNNTAVEKNNNNYKDLSFSGGGSINFDNDVNIGSGGLIFDAGHHYTVTGNNKTFKGAGLDIGDNTTVDWNVKGVVGDNLHKIGAGTLNVNVSQGNNLKTGDGLVVLNSANAFDNIYMASGHGVVKINHSAALNQNNDYRGIFFTENGGTLDLNGYDQSFNKIAATDIGALITNSAVQKAVLSVNNQSNYMYHGSVSGNTEINHQFDTQKNNSRLILDGNVDITNDINIKNSQLTMQGHATSHAVFREGGVTCMLPGVICEKDYVSGIQQQENSANKNNNTDYKTNNQVSSFEQPDWENRLFKFKTLNLINSDFIVGRNAIVVGDISANNSTLSLSGKDTKVHIDMYDGKNITGDGFGFRQDIKDGVSVSPESSSYFGNVTLNNHSLLDIGNKFTGGIEAYDSSVSVTSQNAVFDRVGSFVNSSLTLEKGAKLTAQGGIFSTGAVDVKENASLILTGTPSAQKQEYYSPVISTTEGINLGDKASLSVKNMGYLSSDIHAGTTAATINLGDGDAETDSPLFSSLMKGYNAVLSGNITGEQSTVNMNNALWYSDGNSTIGTLKSTGGRVELGGGKDFATLRVKELNANNATFLMHTNNSQADQLNVTNKLLGSNNTVLVDFLNKPASEMNVTLITAPKGSDEKTFTAGTQQIGFSNVTPVISTEKTDDATKWMLTGYQTVSDAGASKTATDFMASGYKSFLTEVNNLNKRMGDLRDTQGDAGVWARIMNGTGSADGGYSDNYTHVQIGADRKHELDGVDLFTGALLTYTDSNASSHAFSGKTKSVGGGLYASALFDSGAYFDLIGKYLHHDNQYTASFASLGTKDYSSHSWYAGAEVGYRYHLSEESWVEPQMELVYGSVSGKSFSWEDRGMALSMKDKDYNPLIGRTGVDVGRTFSGDDWKITARAGLGYQFDLLANGETVLRDASGEKRFEGEKDSRMLMNVGMNAEIKDNMRFGLELEKSAFGKYNVDNAINANFRYSF</sequence>
<accession>Q9EZE7</accession>
<accession>B7UH71</accession>
<accession>P77070</accession>
<gene>
    <name type="primary">espC</name>
    <name type="ordered locus">E2348C_2915</name>
</gene>
<organism>
    <name type="scientific">Escherichia coli O127:H6 (strain E2348/69 / EPEC)</name>
    <dbReference type="NCBI Taxonomy" id="574521"/>
    <lineage>
        <taxon>Bacteria</taxon>
        <taxon>Pseudomonadati</taxon>
        <taxon>Pseudomonadota</taxon>
        <taxon>Gammaproteobacteria</taxon>
        <taxon>Enterobacterales</taxon>
        <taxon>Enterobacteriaceae</taxon>
        <taxon>Escherichia</taxon>
    </lineage>
</organism>
<name>ESPC_ECO27</name>
<keyword id="KW-0998">Cell outer membrane</keyword>
<keyword id="KW-0903">Direct protein sequencing</keyword>
<keyword id="KW-0378">Hydrolase</keyword>
<keyword id="KW-0472">Membrane</keyword>
<keyword id="KW-0574">Periplasm</keyword>
<keyword id="KW-0645">Protease</keyword>
<keyword id="KW-1185">Reference proteome</keyword>
<keyword id="KW-0964">Secreted</keyword>
<keyword id="KW-0720">Serine protease</keyword>
<keyword id="KW-0732">Signal</keyword>
<keyword id="KW-0812">Transmembrane</keyword>
<keyword id="KW-1134">Transmembrane beta strand</keyword>
<keyword id="KW-0843">Virulence</keyword>
<keyword id="KW-0865">Zymogen</keyword>
<protein>
    <recommendedName>
        <fullName>Serine protease EspC</fullName>
        <ecNumber>3.4.21.-</ecNumber>
    </recommendedName>
    <component>
        <recommendedName>
            <fullName>Secreted autotransporter protein EspC</fullName>
        </recommendedName>
        <alternativeName>
            <fullName>EPEC-secreted protein C</fullName>
        </alternativeName>
    </component>
    <component>
        <recommendedName>
            <fullName>Autotransporter protein EspC translocator</fullName>
        </recommendedName>
    </component>
</protein>